<proteinExistence type="inferred from homology"/>
<dbReference type="EC" id="2.3.1.16" evidence="1"/>
<dbReference type="EMBL" id="CP000285">
    <property type="protein sequence ID" value="ABE59739.1"/>
    <property type="molecule type" value="Genomic_DNA"/>
</dbReference>
<dbReference type="RefSeq" id="WP_011507685.1">
    <property type="nucleotide sequence ID" value="NC_007963.1"/>
</dbReference>
<dbReference type="SMR" id="Q1QUW9"/>
<dbReference type="STRING" id="290398.Csal_2392"/>
<dbReference type="GeneID" id="95335093"/>
<dbReference type="KEGG" id="csa:Csal_2392"/>
<dbReference type="eggNOG" id="COG0183">
    <property type="taxonomic scope" value="Bacteria"/>
</dbReference>
<dbReference type="HOGENOM" id="CLU_031026_2_2_6"/>
<dbReference type="OrthoDB" id="9764638at2"/>
<dbReference type="UniPathway" id="UPA00659"/>
<dbReference type="Proteomes" id="UP000000239">
    <property type="component" value="Chromosome"/>
</dbReference>
<dbReference type="GO" id="GO:0005737">
    <property type="term" value="C:cytoplasm"/>
    <property type="evidence" value="ECO:0007669"/>
    <property type="project" value="UniProtKB-SubCell"/>
</dbReference>
<dbReference type="GO" id="GO:0003988">
    <property type="term" value="F:acetyl-CoA C-acyltransferase activity"/>
    <property type="evidence" value="ECO:0007669"/>
    <property type="project" value="UniProtKB-UniRule"/>
</dbReference>
<dbReference type="GO" id="GO:0006635">
    <property type="term" value="P:fatty acid beta-oxidation"/>
    <property type="evidence" value="ECO:0007669"/>
    <property type="project" value="UniProtKB-UniRule"/>
</dbReference>
<dbReference type="GO" id="GO:0010124">
    <property type="term" value="P:phenylacetate catabolic process"/>
    <property type="evidence" value="ECO:0007669"/>
    <property type="project" value="TreeGrafter"/>
</dbReference>
<dbReference type="CDD" id="cd00751">
    <property type="entry name" value="thiolase"/>
    <property type="match status" value="1"/>
</dbReference>
<dbReference type="FunFam" id="3.40.47.10:FF:000010">
    <property type="entry name" value="Acetyl-CoA acetyltransferase (Thiolase)"/>
    <property type="match status" value="1"/>
</dbReference>
<dbReference type="Gene3D" id="3.40.47.10">
    <property type="match status" value="2"/>
</dbReference>
<dbReference type="HAMAP" id="MF_01620">
    <property type="entry name" value="FadA"/>
    <property type="match status" value="1"/>
</dbReference>
<dbReference type="InterPro" id="IPR012805">
    <property type="entry name" value="FadA"/>
</dbReference>
<dbReference type="InterPro" id="IPR002155">
    <property type="entry name" value="Thiolase"/>
</dbReference>
<dbReference type="InterPro" id="IPR016039">
    <property type="entry name" value="Thiolase-like"/>
</dbReference>
<dbReference type="InterPro" id="IPR050215">
    <property type="entry name" value="Thiolase-like_sf_Thiolase"/>
</dbReference>
<dbReference type="InterPro" id="IPR020615">
    <property type="entry name" value="Thiolase_acyl_enz_int_AS"/>
</dbReference>
<dbReference type="InterPro" id="IPR020610">
    <property type="entry name" value="Thiolase_AS"/>
</dbReference>
<dbReference type="InterPro" id="IPR020617">
    <property type="entry name" value="Thiolase_C"/>
</dbReference>
<dbReference type="InterPro" id="IPR020613">
    <property type="entry name" value="Thiolase_CS"/>
</dbReference>
<dbReference type="InterPro" id="IPR020616">
    <property type="entry name" value="Thiolase_N"/>
</dbReference>
<dbReference type="NCBIfam" id="TIGR01930">
    <property type="entry name" value="AcCoA-C-Actrans"/>
    <property type="match status" value="1"/>
</dbReference>
<dbReference type="NCBIfam" id="TIGR02445">
    <property type="entry name" value="fadA"/>
    <property type="match status" value="1"/>
</dbReference>
<dbReference type="NCBIfam" id="NF006510">
    <property type="entry name" value="PRK08947.1"/>
    <property type="match status" value="1"/>
</dbReference>
<dbReference type="PANTHER" id="PTHR43853:SF11">
    <property type="entry name" value="3-KETOACYL-COA THIOLASE FADA"/>
    <property type="match status" value="1"/>
</dbReference>
<dbReference type="PANTHER" id="PTHR43853">
    <property type="entry name" value="3-KETOACYL-COA THIOLASE, PEROXISOMAL"/>
    <property type="match status" value="1"/>
</dbReference>
<dbReference type="Pfam" id="PF02803">
    <property type="entry name" value="Thiolase_C"/>
    <property type="match status" value="1"/>
</dbReference>
<dbReference type="Pfam" id="PF00108">
    <property type="entry name" value="Thiolase_N"/>
    <property type="match status" value="1"/>
</dbReference>
<dbReference type="PIRSF" id="PIRSF000429">
    <property type="entry name" value="Ac-CoA_Ac_transf"/>
    <property type="match status" value="1"/>
</dbReference>
<dbReference type="SUPFAM" id="SSF53901">
    <property type="entry name" value="Thiolase-like"/>
    <property type="match status" value="2"/>
</dbReference>
<dbReference type="PROSITE" id="PS00098">
    <property type="entry name" value="THIOLASE_1"/>
    <property type="match status" value="1"/>
</dbReference>
<dbReference type="PROSITE" id="PS00737">
    <property type="entry name" value="THIOLASE_2"/>
    <property type="match status" value="1"/>
</dbReference>
<dbReference type="PROSITE" id="PS00099">
    <property type="entry name" value="THIOLASE_3"/>
    <property type="match status" value="1"/>
</dbReference>
<comment type="function">
    <text evidence="1">Catalyzes the final step of fatty acid oxidation in which acetyl-CoA is released and the CoA ester of a fatty acid two carbons shorter is formed.</text>
</comment>
<comment type="catalytic activity">
    <reaction evidence="1">
        <text>an acyl-CoA + acetyl-CoA = a 3-oxoacyl-CoA + CoA</text>
        <dbReference type="Rhea" id="RHEA:21564"/>
        <dbReference type="ChEBI" id="CHEBI:57287"/>
        <dbReference type="ChEBI" id="CHEBI:57288"/>
        <dbReference type="ChEBI" id="CHEBI:58342"/>
        <dbReference type="ChEBI" id="CHEBI:90726"/>
        <dbReference type="EC" id="2.3.1.16"/>
    </reaction>
</comment>
<comment type="pathway">
    <text evidence="1">Lipid metabolism; fatty acid beta-oxidation.</text>
</comment>
<comment type="subunit">
    <text evidence="1">Heterotetramer of two alpha chains (FadB) and two beta chains (FadA).</text>
</comment>
<comment type="subcellular location">
    <subcellularLocation>
        <location evidence="1">Cytoplasm</location>
    </subcellularLocation>
</comment>
<comment type="similarity">
    <text evidence="1">Belongs to the thiolase-like superfamily. Thiolase family.</text>
</comment>
<accession>Q1QUW9</accession>
<organism>
    <name type="scientific">Chromohalobacter salexigens (strain ATCC BAA-138 / DSM 3043 / CIP 106854 / NCIMB 13768 / 1H11)</name>
    <dbReference type="NCBI Taxonomy" id="290398"/>
    <lineage>
        <taxon>Bacteria</taxon>
        <taxon>Pseudomonadati</taxon>
        <taxon>Pseudomonadota</taxon>
        <taxon>Gammaproteobacteria</taxon>
        <taxon>Oceanospirillales</taxon>
        <taxon>Halomonadaceae</taxon>
        <taxon>Chromohalobacter</taxon>
    </lineage>
</organism>
<feature type="chain" id="PRO_0000292887" description="3-ketoacyl-CoA thiolase">
    <location>
        <begin position="1"/>
        <end position="392"/>
    </location>
</feature>
<feature type="active site" description="Acyl-thioester intermediate" evidence="1">
    <location>
        <position position="95"/>
    </location>
</feature>
<feature type="active site" description="Proton acceptor" evidence="1">
    <location>
        <position position="347"/>
    </location>
</feature>
<feature type="active site" description="Proton acceptor" evidence="1">
    <location>
        <position position="377"/>
    </location>
</feature>
<protein>
    <recommendedName>
        <fullName evidence="1">3-ketoacyl-CoA thiolase</fullName>
        <ecNumber evidence="1">2.3.1.16</ecNumber>
    </recommendedName>
    <alternativeName>
        <fullName evidence="1">Acetyl-CoA acyltransferase</fullName>
    </alternativeName>
    <alternativeName>
        <fullName evidence="1">Beta-ketothiolase</fullName>
    </alternativeName>
    <alternativeName>
        <fullName evidence="1">Fatty acid oxidation complex subunit beta</fullName>
    </alternativeName>
</protein>
<name>FADA_CHRSD</name>
<reference key="1">
    <citation type="journal article" date="2011" name="Stand. Genomic Sci.">
        <title>Complete genome sequence of the halophilic and highly halotolerant Chromohalobacter salexigens type strain (1H11(T)).</title>
        <authorList>
            <person name="Copeland A."/>
            <person name="O'Connor K."/>
            <person name="Lucas S."/>
            <person name="Lapidus A."/>
            <person name="Berry K.W."/>
            <person name="Detter J.C."/>
            <person name="Del Rio T.G."/>
            <person name="Hammon N."/>
            <person name="Dalin E."/>
            <person name="Tice H."/>
            <person name="Pitluck S."/>
            <person name="Bruce D."/>
            <person name="Goodwin L."/>
            <person name="Han C."/>
            <person name="Tapia R."/>
            <person name="Saunders E."/>
            <person name="Schmutz J."/>
            <person name="Brettin T."/>
            <person name="Larimer F."/>
            <person name="Land M."/>
            <person name="Hauser L."/>
            <person name="Vargas C."/>
            <person name="Nieto J.J."/>
            <person name="Kyrpides N.C."/>
            <person name="Ivanova N."/>
            <person name="Goker M."/>
            <person name="Klenk H.P."/>
            <person name="Csonka L.N."/>
            <person name="Woyke T."/>
        </authorList>
    </citation>
    <scope>NUCLEOTIDE SEQUENCE [LARGE SCALE GENOMIC DNA]</scope>
    <source>
        <strain>ATCC BAA-138 / DSM 3043 / CIP 106854 / NCIMB 13768 / 1H11</strain>
    </source>
</reference>
<gene>
    <name evidence="1" type="primary">fadA</name>
    <name type="ordered locus">Csal_2392</name>
</gene>
<evidence type="ECO:0000255" key="1">
    <source>
        <dbReference type="HAMAP-Rule" id="MF_01620"/>
    </source>
</evidence>
<sequence>MSLNPRDIVVVDAVRTAMAKAKHGAFRNVRAENLSAAVMQALFDRNANLVPAEVDDVIWGCVNQTLEQSMNIARNAAIMTGIPRTVPAQTVNRLCGSSMSALHIATANIKAGMGDFYIIGGVEHMEHVPMTHGVDVNPAASKYAAKAAMMMGLTAELLGKMHGVGREEQDAFGVRSHQRAQAANENGYFDNEIVGVEGHDADGFLRLIDRDEVIRQDANLEDMGKLKPVFDPKGGTVTAGTSSALSVGASALAVMSYERAQALGLEPLARVVSTGVAGCDASIMGYGPVPATQKALKSAGLAIDDIQTVELNEAFAAQSIPVLKDLGLRERMDDAVNLHGGAIALGHPLGCSGARICTTLLNVMRQQDTTLGLATMCIGMGQGVATVFERLK</sequence>
<keyword id="KW-0012">Acyltransferase</keyword>
<keyword id="KW-0963">Cytoplasm</keyword>
<keyword id="KW-0276">Fatty acid metabolism</keyword>
<keyword id="KW-0442">Lipid degradation</keyword>
<keyword id="KW-0443">Lipid metabolism</keyword>
<keyword id="KW-1185">Reference proteome</keyword>
<keyword id="KW-0808">Transferase</keyword>